<sequence length="438" mass="49892">MAKPVVAIVGRANVGKSTLFNKLIKKRIAITQDDPGVTRDRLYMEAEWQNKYFTVVDTGGLEPKSNEIITKNIKKQTELAIETADVILFMVDGKQGITPIDMEVADMLRRTKKSVILVVNKIDHIKQQDNVYDFYNLGFYEIFPISASNSMGLGDLLEAVVSKFDDNSNTESDDDITKVCLIGKPNVGKSSLINNLLNEERMIVTDIAGTTRDAIDSKINYKGNEYIFIDTAGLRKRKKIDTEVERYSVVRTLSAIDRSDICVLMIDATEGVSEQDTKILGYAHDQGKAMIILVNKWDLVEKQTNTMNDFKKDIRTKLGFVMYVPIVFISVKENKRIDTLFTEIEKVDNNYSMRISTGVLNDVISKAVLLNPPPSDKGVRLKIFYITQIEARPPKFLVFINRNDLMHFSYQRYIENQLRENFSFEGVPLQFEFKTRGK</sequence>
<gene>
    <name evidence="1" type="primary">der</name>
    <name type="synonym">engA</name>
    <name type="ordered locus">FMG_0854</name>
</gene>
<evidence type="ECO:0000255" key="1">
    <source>
        <dbReference type="HAMAP-Rule" id="MF_00195"/>
    </source>
</evidence>
<dbReference type="EMBL" id="AP008971">
    <property type="protein sequence ID" value="BAG08272.1"/>
    <property type="molecule type" value="Genomic_DNA"/>
</dbReference>
<dbReference type="RefSeq" id="WP_002841927.1">
    <property type="nucleotide sequence ID" value="NC_010376.1"/>
</dbReference>
<dbReference type="SMR" id="B0S1N2"/>
<dbReference type="STRING" id="334413.FMG_0854"/>
<dbReference type="KEGG" id="fma:FMG_0854"/>
<dbReference type="eggNOG" id="COG1160">
    <property type="taxonomic scope" value="Bacteria"/>
</dbReference>
<dbReference type="HOGENOM" id="CLU_016077_6_2_9"/>
<dbReference type="Proteomes" id="UP000001319">
    <property type="component" value="Chromosome"/>
</dbReference>
<dbReference type="GO" id="GO:0005525">
    <property type="term" value="F:GTP binding"/>
    <property type="evidence" value="ECO:0007669"/>
    <property type="project" value="UniProtKB-UniRule"/>
</dbReference>
<dbReference type="GO" id="GO:0043022">
    <property type="term" value="F:ribosome binding"/>
    <property type="evidence" value="ECO:0007669"/>
    <property type="project" value="TreeGrafter"/>
</dbReference>
<dbReference type="GO" id="GO:0042254">
    <property type="term" value="P:ribosome biogenesis"/>
    <property type="evidence" value="ECO:0007669"/>
    <property type="project" value="UniProtKB-KW"/>
</dbReference>
<dbReference type="CDD" id="cd01894">
    <property type="entry name" value="EngA1"/>
    <property type="match status" value="1"/>
</dbReference>
<dbReference type="CDD" id="cd01895">
    <property type="entry name" value="EngA2"/>
    <property type="match status" value="1"/>
</dbReference>
<dbReference type="FunFam" id="3.30.300.20:FF:000004">
    <property type="entry name" value="GTPase Der"/>
    <property type="match status" value="1"/>
</dbReference>
<dbReference type="FunFam" id="3.40.50.300:FF:000040">
    <property type="entry name" value="GTPase Der"/>
    <property type="match status" value="1"/>
</dbReference>
<dbReference type="FunFam" id="3.40.50.300:FF:000057">
    <property type="entry name" value="GTPase Der"/>
    <property type="match status" value="1"/>
</dbReference>
<dbReference type="Gene3D" id="3.30.300.20">
    <property type="match status" value="1"/>
</dbReference>
<dbReference type="Gene3D" id="3.40.50.300">
    <property type="entry name" value="P-loop containing nucleotide triphosphate hydrolases"/>
    <property type="match status" value="2"/>
</dbReference>
<dbReference type="HAMAP" id="MF_00195">
    <property type="entry name" value="GTPase_Der"/>
    <property type="match status" value="1"/>
</dbReference>
<dbReference type="InterPro" id="IPR031166">
    <property type="entry name" value="G_ENGA"/>
</dbReference>
<dbReference type="InterPro" id="IPR006073">
    <property type="entry name" value="GTP-bd"/>
</dbReference>
<dbReference type="InterPro" id="IPR016484">
    <property type="entry name" value="GTPase_Der"/>
</dbReference>
<dbReference type="InterPro" id="IPR032859">
    <property type="entry name" value="KH_dom-like"/>
</dbReference>
<dbReference type="InterPro" id="IPR015946">
    <property type="entry name" value="KH_dom-like_a/b"/>
</dbReference>
<dbReference type="InterPro" id="IPR027417">
    <property type="entry name" value="P-loop_NTPase"/>
</dbReference>
<dbReference type="InterPro" id="IPR005225">
    <property type="entry name" value="Small_GTP-bd"/>
</dbReference>
<dbReference type="NCBIfam" id="TIGR03594">
    <property type="entry name" value="GTPase_EngA"/>
    <property type="match status" value="1"/>
</dbReference>
<dbReference type="NCBIfam" id="TIGR00231">
    <property type="entry name" value="small_GTP"/>
    <property type="match status" value="2"/>
</dbReference>
<dbReference type="PANTHER" id="PTHR43834">
    <property type="entry name" value="GTPASE DER"/>
    <property type="match status" value="1"/>
</dbReference>
<dbReference type="PANTHER" id="PTHR43834:SF6">
    <property type="entry name" value="GTPASE DER"/>
    <property type="match status" value="1"/>
</dbReference>
<dbReference type="Pfam" id="PF14714">
    <property type="entry name" value="KH_dom-like"/>
    <property type="match status" value="1"/>
</dbReference>
<dbReference type="Pfam" id="PF01926">
    <property type="entry name" value="MMR_HSR1"/>
    <property type="match status" value="2"/>
</dbReference>
<dbReference type="PIRSF" id="PIRSF006485">
    <property type="entry name" value="GTP-binding_EngA"/>
    <property type="match status" value="1"/>
</dbReference>
<dbReference type="PRINTS" id="PR00326">
    <property type="entry name" value="GTP1OBG"/>
</dbReference>
<dbReference type="SUPFAM" id="SSF52540">
    <property type="entry name" value="P-loop containing nucleoside triphosphate hydrolases"/>
    <property type="match status" value="2"/>
</dbReference>
<dbReference type="PROSITE" id="PS51712">
    <property type="entry name" value="G_ENGA"/>
    <property type="match status" value="2"/>
</dbReference>
<name>DER_FINM2</name>
<organism>
    <name type="scientific">Finegoldia magna (strain ATCC 29328 / DSM 20472 / WAL 2508)</name>
    <name type="common">Peptostreptococcus magnus</name>
    <dbReference type="NCBI Taxonomy" id="334413"/>
    <lineage>
        <taxon>Bacteria</taxon>
        <taxon>Bacillati</taxon>
        <taxon>Bacillota</taxon>
        <taxon>Tissierellia</taxon>
        <taxon>Tissierellales</taxon>
        <taxon>Peptoniphilaceae</taxon>
        <taxon>Finegoldia</taxon>
    </lineage>
</organism>
<keyword id="KW-0342">GTP-binding</keyword>
<keyword id="KW-0547">Nucleotide-binding</keyword>
<keyword id="KW-1185">Reference proteome</keyword>
<keyword id="KW-0677">Repeat</keyword>
<keyword id="KW-0690">Ribosome biogenesis</keyword>
<reference key="1">
    <citation type="journal article" date="2008" name="DNA Res.">
        <title>Complete genome sequence of Finegoldia magna, an anaerobic opportunistic pathogen.</title>
        <authorList>
            <person name="Goto T."/>
            <person name="Yamashita A."/>
            <person name="Hirakawa H."/>
            <person name="Matsutani M."/>
            <person name="Todo K."/>
            <person name="Ohshima K."/>
            <person name="Toh H."/>
            <person name="Miyamoto K."/>
            <person name="Kuhara S."/>
            <person name="Hattori M."/>
            <person name="Shimizu T."/>
            <person name="Akimoto S."/>
        </authorList>
    </citation>
    <scope>NUCLEOTIDE SEQUENCE [LARGE SCALE GENOMIC DNA]</scope>
    <source>
        <strain>ATCC 29328 / DSM 20472 / WAL 2508</strain>
    </source>
</reference>
<feature type="chain" id="PRO_1000099121" description="GTPase Der">
    <location>
        <begin position="1"/>
        <end position="438"/>
    </location>
</feature>
<feature type="domain" description="EngA-type G 1">
    <location>
        <begin position="4"/>
        <end position="168"/>
    </location>
</feature>
<feature type="domain" description="EngA-type G 2">
    <location>
        <begin position="177"/>
        <end position="352"/>
    </location>
</feature>
<feature type="domain" description="KH-like" evidence="1">
    <location>
        <begin position="353"/>
        <end position="437"/>
    </location>
</feature>
<feature type="binding site" evidence="1">
    <location>
        <begin position="10"/>
        <end position="17"/>
    </location>
    <ligand>
        <name>GTP</name>
        <dbReference type="ChEBI" id="CHEBI:37565"/>
        <label>1</label>
    </ligand>
</feature>
<feature type="binding site" evidence="1">
    <location>
        <begin position="57"/>
        <end position="61"/>
    </location>
    <ligand>
        <name>GTP</name>
        <dbReference type="ChEBI" id="CHEBI:37565"/>
        <label>1</label>
    </ligand>
</feature>
<feature type="binding site" evidence="1">
    <location>
        <begin position="120"/>
        <end position="123"/>
    </location>
    <ligand>
        <name>GTP</name>
        <dbReference type="ChEBI" id="CHEBI:37565"/>
        <label>1</label>
    </ligand>
</feature>
<feature type="binding site" evidence="1">
    <location>
        <begin position="183"/>
        <end position="190"/>
    </location>
    <ligand>
        <name>GTP</name>
        <dbReference type="ChEBI" id="CHEBI:37565"/>
        <label>2</label>
    </ligand>
</feature>
<feature type="binding site" evidence="1">
    <location>
        <begin position="230"/>
        <end position="234"/>
    </location>
    <ligand>
        <name>GTP</name>
        <dbReference type="ChEBI" id="CHEBI:37565"/>
        <label>2</label>
    </ligand>
</feature>
<feature type="binding site" evidence="1">
    <location>
        <begin position="295"/>
        <end position="298"/>
    </location>
    <ligand>
        <name>GTP</name>
        <dbReference type="ChEBI" id="CHEBI:37565"/>
        <label>2</label>
    </ligand>
</feature>
<protein>
    <recommendedName>
        <fullName evidence="1">GTPase Der</fullName>
    </recommendedName>
    <alternativeName>
        <fullName evidence="1">GTP-binding protein EngA</fullName>
    </alternativeName>
</protein>
<accession>B0S1N2</accession>
<proteinExistence type="inferred from homology"/>
<comment type="function">
    <text evidence="1">GTPase that plays an essential role in the late steps of ribosome biogenesis.</text>
</comment>
<comment type="subunit">
    <text evidence="1">Associates with the 50S ribosomal subunit.</text>
</comment>
<comment type="similarity">
    <text evidence="1">Belongs to the TRAFAC class TrmE-Era-EngA-EngB-Septin-like GTPase superfamily. EngA (Der) GTPase family.</text>
</comment>